<name>UVRC_CORGL</name>
<reference key="1">
    <citation type="journal article" date="2003" name="Appl. Microbiol. Biotechnol.">
        <title>The Corynebacterium glutamicum genome: features and impacts on biotechnological processes.</title>
        <authorList>
            <person name="Ikeda M."/>
            <person name="Nakagawa S."/>
        </authorList>
    </citation>
    <scope>NUCLEOTIDE SEQUENCE [LARGE SCALE GENOMIC DNA]</scope>
    <source>
        <strain>ATCC 13032 / DSM 20300 / JCM 1318 / BCRC 11384 / CCUG 27702 / LMG 3730 / NBRC 12168 / NCIMB 10025 / NRRL B-2784 / 534</strain>
    </source>
</reference>
<reference key="2">
    <citation type="journal article" date="2003" name="J. Biotechnol.">
        <title>The complete Corynebacterium glutamicum ATCC 13032 genome sequence and its impact on the production of L-aspartate-derived amino acids and vitamins.</title>
        <authorList>
            <person name="Kalinowski J."/>
            <person name="Bathe B."/>
            <person name="Bartels D."/>
            <person name="Bischoff N."/>
            <person name="Bott M."/>
            <person name="Burkovski A."/>
            <person name="Dusch N."/>
            <person name="Eggeling L."/>
            <person name="Eikmanns B.J."/>
            <person name="Gaigalat L."/>
            <person name="Goesmann A."/>
            <person name="Hartmann M."/>
            <person name="Huthmacher K."/>
            <person name="Kraemer R."/>
            <person name="Linke B."/>
            <person name="McHardy A.C."/>
            <person name="Meyer F."/>
            <person name="Moeckel B."/>
            <person name="Pfefferle W."/>
            <person name="Puehler A."/>
            <person name="Rey D.A."/>
            <person name="Rueckert C."/>
            <person name="Rupp O."/>
            <person name="Sahm H."/>
            <person name="Wendisch V.F."/>
            <person name="Wiegraebe I."/>
            <person name="Tauch A."/>
        </authorList>
    </citation>
    <scope>NUCLEOTIDE SEQUENCE [LARGE SCALE GENOMIC DNA]</scope>
    <source>
        <strain>ATCC 13032 / DSM 20300 / JCM 1318 / BCRC 11384 / CCUG 27702 / LMG 3730 / NBRC 12168 / NCIMB 10025 / NRRL B-2784 / 534</strain>
    </source>
</reference>
<protein>
    <recommendedName>
        <fullName evidence="1">UvrABC system protein C</fullName>
        <shortName evidence="1">Protein UvrC</shortName>
    </recommendedName>
    <alternativeName>
        <fullName evidence="1">Excinuclease ABC subunit C</fullName>
    </alternativeName>
</protein>
<evidence type="ECO:0000255" key="1">
    <source>
        <dbReference type="HAMAP-Rule" id="MF_00203"/>
    </source>
</evidence>
<accession>Q8NQ55</accession>
<accession>Q6M508</accession>
<feature type="chain" id="PRO_0000227419" description="UvrABC system protein C">
    <location>
        <begin position="1"/>
        <end position="696"/>
    </location>
</feature>
<feature type="domain" description="GIY-YIG" evidence="1">
    <location>
        <begin position="16"/>
        <end position="95"/>
    </location>
</feature>
<feature type="domain" description="UVR" evidence="1">
    <location>
        <begin position="208"/>
        <end position="243"/>
    </location>
</feature>
<comment type="function">
    <text evidence="1">The UvrABC repair system catalyzes the recognition and processing of DNA lesions. UvrC both incises the 5' and 3' sides of the lesion. The N-terminal half is responsible for the 3' incision and the C-terminal half is responsible for the 5' incision.</text>
</comment>
<comment type="subunit">
    <text evidence="1">Interacts with UvrB in an incision complex.</text>
</comment>
<comment type="subcellular location">
    <subcellularLocation>
        <location evidence="1">Cytoplasm</location>
    </subcellularLocation>
</comment>
<comment type="similarity">
    <text evidence="1">Belongs to the UvrC family.</text>
</comment>
<gene>
    <name evidence="1" type="primary">uvrC</name>
    <name type="ordered locus">Cgl1592</name>
    <name type="ordered locus">cg1795</name>
</gene>
<dbReference type="EMBL" id="BA000036">
    <property type="protein sequence ID" value="BAB98985.1"/>
    <property type="molecule type" value="Genomic_DNA"/>
</dbReference>
<dbReference type="EMBL" id="BX927152">
    <property type="protein sequence ID" value="CAF21600.1"/>
    <property type="molecule type" value="Genomic_DNA"/>
</dbReference>
<dbReference type="RefSeq" id="NP_600806.1">
    <property type="nucleotide sequence ID" value="NC_003450.3"/>
</dbReference>
<dbReference type="RefSeq" id="WP_011014468.1">
    <property type="nucleotide sequence ID" value="NC_006958.1"/>
</dbReference>
<dbReference type="SMR" id="Q8NQ55"/>
<dbReference type="STRING" id="196627.cg1795"/>
<dbReference type="GeneID" id="1019560"/>
<dbReference type="KEGG" id="cgb:cg1795"/>
<dbReference type="KEGG" id="cgl:Cgl1592"/>
<dbReference type="PATRIC" id="fig|196627.13.peg.1554"/>
<dbReference type="eggNOG" id="COG0322">
    <property type="taxonomic scope" value="Bacteria"/>
</dbReference>
<dbReference type="HOGENOM" id="CLU_014841_3_2_11"/>
<dbReference type="OrthoDB" id="9804933at2"/>
<dbReference type="BioCyc" id="CORYNE:G18NG-11177-MONOMER"/>
<dbReference type="Proteomes" id="UP000000582">
    <property type="component" value="Chromosome"/>
</dbReference>
<dbReference type="Proteomes" id="UP000001009">
    <property type="component" value="Chromosome"/>
</dbReference>
<dbReference type="GO" id="GO:0005737">
    <property type="term" value="C:cytoplasm"/>
    <property type="evidence" value="ECO:0007669"/>
    <property type="project" value="UniProtKB-SubCell"/>
</dbReference>
<dbReference type="GO" id="GO:0009380">
    <property type="term" value="C:excinuclease repair complex"/>
    <property type="evidence" value="ECO:0007669"/>
    <property type="project" value="InterPro"/>
</dbReference>
<dbReference type="GO" id="GO:0003677">
    <property type="term" value="F:DNA binding"/>
    <property type="evidence" value="ECO:0007669"/>
    <property type="project" value="UniProtKB-UniRule"/>
</dbReference>
<dbReference type="GO" id="GO:0009381">
    <property type="term" value="F:excinuclease ABC activity"/>
    <property type="evidence" value="ECO:0007669"/>
    <property type="project" value="UniProtKB-UniRule"/>
</dbReference>
<dbReference type="GO" id="GO:0006289">
    <property type="term" value="P:nucleotide-excision repair"/>
    <property type="evidence" value="ECO:0007669"/>
    <property type="project" value="UniProtKB-UniRule"/>
</dbReference>
<dbReference type="GO" id="GO:0009432">
    <property type="term" value="P:SOS response"/>
    <property type="evidence" value="ECO:0007669"/>
    <property type="project" value="UniProtKB-UniRule"/>
</dbReference>
<dbReference type="CDD" id="cd10434">
    <property type="entry name" value="GIY-YIG_UvrC_Cho"/>
    <property type="match status" value="1"/>
</dbReference>
<dbReference type="FunFam" id="3.30.420.340:FF:000003">
    <property type="entry name" value="UvrABC system protein C"/>
    <property type="match status" value="1"/>
</dbReference>
<dbReference type="FunFam" id="3.40.1440.10:FF:000001">
    <property type="entry name" value="UvrABC system protein C"/>
    <property type="match status" value="1"/>
</dbReference>
<dbReference type="Gene3D" id="1.10.150.20">
    <property type="entry name" value="5' to 3' exonuclease, C-terminal subdomain"/>
    <property type="match status" value="1"/>
</dbReference>
<dbReference type="Gene3D" id="3.40.1440.10">
    <property type="entry name" value="GIY-YIG endonuclease"/>
    <property type="match status" value="1"/>
</dbReference>
<dbReference type="Gene3D" id="4.10.860.10">
    <property type="entry name" value="UVR domain"/>
    <property type="match status" value="1"/>
</dbReference>
<dbReference type="Gene3D" id="3.30.420.340">
    <property type="entry name" value="UvrC, RNAse H endonuclease domain"/>
    <property type="match status" value="1"/>
</dbReference>
<dbReference type="HAMAP" id="MF_00203">
    <property type="entry name" value="UvrC"/>
    <property type="match status" value="1"/>
</dbReference>
<dbReference type="InterPro" id="IPR000305">
    <property type="entry name" value="GIY-YIG_endonuc"/>
</dbReference>
<dbReference type="InterPro" id="IPR035901">
    <property type="entry name" value="GIY-YIG_endonuc_sf"/>
</dbReference>
<dbReference type="InterPro" id="IPR047296">
    <property type="entry name" value="GIY-YIG_UvrC_Cho"/>
</dbReference>
<dbReference type="InterPro" id="IPR003583">
    <property type="entry name" value="Hlx-hairpin-Hlx_DNA-bd_motif"/>
</dbReference>
<dbReference type="InterPro" id="IPR010994">
    <property type="entry name" value="RuvA_2-like"/>
</dbReference>
<dbReference type="InterPro" id="IPR001943">
    <property type="entry name" value="UVR_dom"/>
</dbReference>
<dbReference type="InterPro" id="IPR036876">
    <property type="entry name" value="UVR_dom_sf"/>
</dbReference>
<dbReference type="InterPro" id="IPR050066">
    <property type="entry name" value="UvrABC_protein_C"/>
</dbReference>
<dbReference type="InterPro" id="IPR004791">
    <property type="entry name" value="UvrC"/>
</dbReference>
<dbReference type="InterPro" id="IPR001162">
    <property type="entry name" value="UvrC_RNase_H_dom"/>
</dbReference>
<dbReference type="InterPro" id="IPR038476">
    <property type="entry name" value="UvrC_RNase_H_dom_sf"/>
</dbReference>
<dbReference type="NCBIfam" id="NF001824">
    <property type="entry name" value="PRK00558.1-5"/>
    <property type="match status" value="1"/>
</dbReference>
<dbReference type="NCBIfam" id="TIGR00194">
    <property type="entry name" value="uvrC"/>
    <property type="match status" value="1"/>
</dbReference>
<dbReference type="PANTHER" id="PTHR30562:SF1">
    <property type="entry name" value="UVRABC SYSTEM PROTEIN C"/>
    <property type="match status" value="1"/>
</dbReference>
<dbReference type="PANTHER" id="PTHR30562">
    <property type="entry name" value="UVRC/OXIDOREDUCTASE"/>
    <property type="match status" value="1"/>
</dbReference>
<dbReference type="Pfam" id="PF01541">
    <property type="entry name" value="GIY-YIG"/>
    <property type="match status" value="1"/>
</dbReference>
<dbReference type="Pfam" id="PF14520">
    <property type="entry name" value="HHH_5"/>
    <property type="match status" value="1"/>
</dbReference>
<dbReference type="Pfam" id="PF02151">
    <property type="entry name" value="UVR"/>
    <property type="match status" value="1"/>
</dbReference>
<dbReference type="Pfam" id="PF22920">
    <property type="entry name" value="UvrC_RNaseH"/>
    <property type="match status" value="1"/>
</dbReference>
<dbReference type="Pfam" id="PF08459">
    <property type="entry name" value="UvrC_RNaseH_dom"/>
    <property type="match status" value="1"/>
</dbReference>
<dbReference type="SMART" id="SM00465">
    <property type="entry name" value="GIYc"/>
    <property type="match status" value="1"/>
</dbReference>
<dbReference type="SMART" id="SM00278">
    <property type="entry name" value="HhH1"/>
    <property type="match status" value="2"/>
</dbReference>
<dbReference type="SUPFAM" id="SSF46600">
    <property type="entry name" value="C-terminal UvrC-binding domain of UvrB"/>
    <property type="match status" value="1"/>
</dbReference>
<dbReference type="SUPFAM" id="SSF82771">
    <property type="entry name" value="GIY-YIG endonuclease"/>
    <property type="match status" value="1"/>
</dbReference>
<dbReference type="SUPFAM" id="SSF47781">
    <property type="entry name" value="RuvA domain 2-like"/>
    <property type="match status" value="1"/>
</dbReference>
<dbReference type="PROSITE" id="PS50164">
    <property type="entry name" value="GIY_YIG"/>
    <property type="match status" value="1"/>
</dbReference>
<dbReference type="PROSITE" id="PS50151">
    <property type="entry name" value="UVR"/>
    <property type="match status" value="1"/>
</dbReference>
<dbReference type="PROSITE" id="PS50165">
    <property type="entry name" value="UVRC"/>
    <property type="match status" value="1"/>
</dbReference>
<keyword id="KW-0963">Cytoplasm</keyword>
<keyword id="KW-0227">DNA damage</keyword>
<keyword id="KW-0228">DNA excision</keyword>
<keyword id="KW-0234">DNA repair</keyword>
<keyword id="KW-0267">Excision nuclease</keyword>
<keyword id="KW-1185">Reference proteome</keyword>
<keyword id="KW-0742">SOS response</keyword>
<sequence>MADPTTYRPAPGTIPTEPGVYKFRDENRRVIYVGKAKNLRSRLSNYFQDVTQLHPRTRQMVFAASSVEWTVVSSEVEALQLEYTWIKRFDPRFNVKYRDDKTYPMLAVSTGERFPRAFFFRGPRRKGVRYFGPYSHAWAVRETLDLLTRVFPMRTCSKGVFNRHESLGRPCLLGYIDKCAAPCVGRVSEEEHREIVDGFTSFMAGHTDKVTRKLNADMMAAAEELDFERAARLRDDLEAIDKVMEKQAVVLGDGTDADIIAFATDQLEAAVQVFNIRGGRIRGQRGWVVEKPGDYAGLLVDATTQPEGDAPETDPALPFLMQDFLVQFYGDAVERAETEAKEDAAVIERRGVDKHSFEEAAPVTRASVVPREILVQVAPNEAEQTLKVLEELRGAGVDARVPQRGDKRALMETVERNAKELLKQHKLKRVGDLTARSAALQELQEALDMEQAPLRIECTDISHIQGTDVVASLVVFEDGLPRKSDYRRYRVKEAAGDGHSNDVASIAEITRRRFLRHNQDKLAVPEAEEFDGSTFSDEKVEEMSTDARRFAYPPQIFIVDGGAPQVAAAQEVFDELGIVDVVLIGLAKRLEEIWLPGDPDPVILPRNSQALFLLQQIRDEAHRFAITYHRQQRSKRMRVSELDSIKGLGQSRRTELVKHFGSVAKLKEASVEDISQVKGFGPKLAEAVYEGLHASK</sequence>
<proteinExistence type="inferred from homology"/>
<organism>
    <name type="scientific">Corynebacterium glutamicum (strain ATCC 13032 / DSM 20300 / JCM 1318 / BCRC 11384 / CCUG 27702 / LMG 3730 / NBRC 12168 / NCIMB 10025 / NRRL B-2784 / 534)</name>
    <dbReference type="NCBI Taxonomy" id="196627"/>
    <lineage>
        <taxon>Bacteria</taxon>
        <taxon>Bacillati</taxon>
        <taxon>Actinomycetota</taxon>
        <taxon>Actinomycetes</taxon>
        <taxon>Mycobacteriales</taxon>
        <taxon>Corynebacteriaceae</taxon>
        <taxon>Corynebacterium</taxon>
    </lineage>
</organism>